<gene>
    <name type="ORF">SPCC1442.03</name>
    <name type="ORF">SPCC1450.19</name>
</gene>
<reference key="1">
    <citation type="journal article" date="2002" name="Nature">
        <title>The genome sequence of Schizosaccharomyces pombe.</title>
        <authorList>
            <person name="Wood V."/>
            <person name="Gwilliam R."/>
            <person name="Rajandream M.A."/>
            <person name="Lyne M.H."/>
            <person name="Lyne R."/>
            <person name="Stewart A."/>
            <person name="Sgouros J.G."/>
            <person name="Peat N."/>
            <person name="Hayles J."/>
            <person name="Baker S.G."/>
            <person name="Basham D."/>
            <person name="Bowman S."/>
            <person name="Brooks K."/>
            <person name="Brown D."/>
            <person name="Brown S."/>
            <person name="Chillingworth T."/>
            <person name="Churcher C.M."/>
            <person name="Collins M."/>
            <person name="Connor R."/>
            <person name="Cronin A."/>
            <person name="Davis P."/>
            <person name="Feltwell T."/>
            <person name="Fraser A."/>
            <person name="Gentles S."/>
            <person name="Goble A."/>
            <person name="Hamlin N."/>
            <person name="Harris D.E."/>
            <person name="Hidalgo J."/>
            <person name="Hodgson G."/>
            <person name="Holroyd S."/>
            <person name="Hornsby T."/>
            <person name="Howarth S."/>
            <person name="Huckle E.J."/>
            <person name="Hunt S."/>
            <person name="Jagels K."/>
            <person name="James K.D."/>
            <person name="Jones L."/>
            <person name="Jones M."/>
            <person name="Leather S."/>
            <person name="McDonald S."/>
            <person name="McLean J."/>
            <person name="Mooney P."/>
            <person name="Moule S."/>
            <person name="Mungall K.L."/>
            <person name="Murphy L.D."/>
            <person name="Niblett D."/>
            <person name="Odell C."/>
            <person name="Oliver K."/>
            <person name="O'Neil S."/>
            <person name="Pearson D."/>
            <person name="Quail M.A."/>
            <person name="Rabbinowitsch E."/>
            <person name="Rutherford K.M."/>
            <person name="Rutter S."/>
            <person name="Saunders D."/>
            <person name="Seeger K."/>
            <person name="Sharp S."/>
            <person name="Skelton J."/>
            <person name="Simmonds M.N."/>
            <person name="Squares R."/>
            <person name="Squares S."/>
            <person name="Stevens K."/>
            <person name="Taylor K."/>
            <person name="Taylor R.G."/>
            <person name="Tivey A."/>
            <person name="Walsh S.V."/>
            <person name="Warren T."/>
            <person name="Whitehead S."/>
            <person name="Woodward J.R."/>
            <person name="Volckaert G."/>
            <person name="Aert R."/>
            <person name="Robben J."/>
            <person name="Grymonprez B."/>
            <person name="Weltjens I."/>
            <person name="Vanstreels E."/>
            <person name="Rieger M."/>
            <person name="Schaefer M."/>
            <person name="Mueller-Auer S."/>
            <person name="Gabel C."/>
            <person name="Fuchs M."/>
            <person name="Duesterhoeft A."/>
            <person name="Fritzc C."/>
            <person name="Holzer E."/>
            <person name="Moestl D."/>
            <person name="Hilbert H."/>
            <person name="Borzym K."/>
            <person name="Langer I."/>
            <person name="Beck A."/>
            <person name="Lehrach H."/>
            <person name="Reinhardt R."/>
            <person name="Pohl T.M."/>
            <person name="Eger P."/>
            <person name="Zimmermann W."/>
            <person name="Wedler H."/>
            <person name="Wambutt R."/>
            <person name="Purnelle B."/>
            <person name="Goffeau A."/>
            <person name="Cadieu E."/>
            <person name="Dreano S."/>
            <person name="Gloux S."/>
            <person name="Lelaure V."/>
            <person name="Mottier S."/>
            <person name="Galibert F."/>
            <person name="Aves S.J."/>
            <person name="Xiang Z."/>
            <person name="Hunt C."/>
            <person name="Moore K."/>
            <person name="Hurst S.M."/>
            <person name="Lucas M."/>
            <person name="Rochet M."/>
            <person name="Gaillardin C."/>
            <person name="Tallada V.A."/>
            <person name="Garzon A."/>
            <person name="Thode G."/>
            <person name="Daga R.R."/>
            <person name="Cruzado L."/>
            <person name="Jimenez J."/>
            <person name="Sanchez M."/>
            <person name="del Rey F."/>
            <person name="Benito J."/>
            <person name="Dominguez A."/>
            <person name="Revuelta J.L."/>
            <person name="Moreno S."/>
            <person name="Armstrong J."/>
            <person name="Forsburg S.L."/>
            <person name="Cerutti L."/>
            <person name="Lowe T."/>
            <person name="McCombie W.R."/>
            <person name="Paulsen I."/>
            <person name="Potashkin J."/>
            <person name="Shpakovski G.V."/>
            <person name="Ussery D."/>
            <person name="Barrell B.G."/>
            <person name="Nurse P."/>
        </authorList>
    </citation>
    <scope>NUCLEOTIDE SEQUENCE [LARGE SCALE GENOMIC DNA]</scope>
    <source>
        <strain>972 / ATCC 24843</strain>
    </source>
</reference>
<feature type="chain" id="PRO_0000343156" description="Uncharacterized mitochondrial carrier C1442.03">
    <location>
        <begin position="1"/>
        <end position="338"/>
    </location>
</feature>
<feature type="transmembrane region" description="Helical; Name=1" evidence="2">
    <location>
        <begin position="13"/>
        <end position="33"/>
    </location>
</feature>
<feature type="transmembrane region" description="Helical; Name=2" evidence="2">
    <location>
        <begin position="71"/>
        <end position="91"/>
    </location>
</feature>
<feature type="transmembrane region" description="Helical; Name=3" evidence="2">
    <location>
        <begin position="110"/>
        <end position="130"/>
    </location>
</feature>
<feature type="transmembrane region" description="Helical; Name=4" evidence="2">
    <location>
        <begin position="176"/>
        <end position="196"/>
    </location>
</feature>
<feature type="transmembrane region" description="Helical; Name=5" evidence="2">
    <location>
        <begin position="218"/>
        <end position="238"/>
    </location>
</feature>
<feature type="transmembrane region" description="Helical; Name=6" evidence="2">
    <location>
        <begin position="301"/>
        <end position="321"/>
    </location>
</feature>
<feature type="repeat" description="Solcar 1">
    <location>
        <begin position="13"/>
        <end position="100"/>
    </location>
</feature>
<feature type="repeat" description="Solcar 2">
    <location>
        <begin position="108"/>
        <end position="202"/>
    </location>
</feature>
<feature type="repeat" description="Solcar 3">
    <location>
        <begin position="216"/>
        <end position="328"/>
    </location>
</feature>
<name>YQ73_SCHPO</name>
<comment type="function">
    <text evidence="1">Mitochondrial solute carriers shuttle metabolites, nucleotides, and cofactors through the mitochondrial inner membrane.</text>
</comment>
<comment type="subcellular location">
    <subcellularLocation>
        <location evidence="1">Mitochondrion inner membrane</location>
        <topology evidence="1">Multi-pass membrane protein</topology>
    </subcellularLocation>
</comment>
<comment type="similarity">
    <text evidence="3">Belongs to the mitochondrial carrier (TC 2.A.29) family.</text>
</comment>
<proteinExistence type="inferred from homology"/>
<accession>Q76PC3</accession>
<keyword id="KW-0472">Membrane</keyword>
<keyword id="KW-0496">Mitochondrion</keyword>
<keyword id="KW-0999">Mitochondrion inner membrane</keyword>
<keyword id="KW-1185">Reference proteome</keyword>
<keyword id="KW-0677">Repeat</keyword>
<keyword id="KW-0812">Transmembrane</keyword>
<keyword id="KW-1133">Transmembrane helix</keyword>
<keyword id="KW-0813">Transport</keyword>
<evidence type="ECO:0000250" key="1"/>
<evidence type="ECO:0000255" key="2"/>
<evidence type="ECO:0000305" key="3"/>
<sequence>MEPGIPPMIDKAPAYSHVLIAGGIGGATADFLMHSLDTVKTRQQAALYTNKYNGMVKCYSTILCEEGVFHGLYSGVCPMLIGSLPATALFFSSYEYTKRHLMSNYNLPETLCFLLAGFVGDLFASVVYVPSEVLKTRLQLQGRYNNPHFQSNYNYPSFRGAVKQIAKQEGMKTFFYGYRATILRDIPFSGFQLLFYEKLRQVAQKECGQKDIGVFRELITGSLAGAGAGFLTTPLDVAKTRLQTMIRTTDKVSDDINSGRYFFAKDENSKSKSAASLVKPKIGIRHVLGGLYKSEGLLGLFRGFGPRIFWTSSQSSLMFVFYEGIIRLFNKNNVLERD</sequence>
<protein>
    <recommendedName>
        <fullName>Uncharacterized mitochondrial carrier C1442.03</fullName>
    </recommendedName>
</protein>
<dbReference type="EMBL" id="CU329672">
    <property type="protein sequence ID" value="CAB40186.1"/>
    <property type="molecule type" value="Genomic_DNA"/>
</dbReference>
<dbReference type="PIR" id="T40968">
    <property type="entry name" value="T40968"/>
</dbReference>
<dbReference type="RefSeq" id="NP_588318.1">
    <property type="nucleotide sequence ID" value="NM_001023308.2"/>
</dbReference>
<dbReference type="SMR" id="Q76PC3"/>
<dbReference type="FunCoup" id="Q76PC3">
    <property type="interactions" value="10"/>
</dbReference>
<dbReference type="STRING" id="284812.Q76PC3"/>
<dbReference type="PaxDb" id="4896-SPCC1442.03.1"/>
<dbReference type="EnsemblFungi" id="SPCC1442.03.1">
    <property type="protein sequence ID" value="SPCC1442.03.1:pep"/>
    <property type="gene ID" value="SPCC1442.03"/>
</dbReference>
<dbReference type="GeneID" id="2538899"/>
<dbReference type="KEGG" id="spo:2538899"/>
<dbReference type="PomBase" id="SPCC1442.03"/>
<dbReference type="VEuPathDB" id="FungiDB:SPCC1442.03"/>
<dbReference type="eggNOG" id="KOG0770">
    <property type="taxonomic scope" value="Eukaryota"/>
</dbReference>
<dbReference type="HOGENOM" id="CLU_015166_3_2_1"/>
<dbReference type="InParanoid" id="Q76PC3"/>
<dbReference type="OMA" id="FFGVYEF"/>
<dbReference type="PhylomeDB" id="Q76PC3"/>
<dbReference type="PRO" id="PR:Q76PC3"/>
<dbReference type="Proteomes" id="UP000002485">
    <property type="component" value="Chromosome III"/>
</dbReference>
<dbReference type="GO" id="GO:0005743">
    <property type="term" value="C:mitochondrial inner membrane"/>
    <property type="evidence" value="ECO:0000250"/>
    <property type="project" value="PomBase"/>
</dbReference>
<dbReference type="GO" id="GO:0015095">
    <property type="term" value="F:magnesium ion transmembrane transporter activity"/>
    <property type="evidence" value="ECO:0000318"/>
    <property type="project" value="GO_Central"/>
</dbReference>
<dbReference type="GO" id="GO:1990616">
    <property type="term" value="P:magnesium ion export from mitochondrion"/>
    <property type="evidence" value="ECO:0000318"/>
    <property type="project" value="GO_Central"/>
</dbReference>
<dbReference type="FunFam" id="1.50.40.10:FF:000095">
    <property type="entry name" value="Mitochondrial carrier protein"/>
    <property type="match status" value="1"/>
</dbReference>
<dbReference type="FunFam" id="1.50.40.10:FF:000125">
    <property type="entry name" value="YMR166C-like protein"/>
    <property type="match status" value="1"/>
</dbReference>
<dbReference type="Gene3D" id="1.50.40.10">
    <property type="entry name" value="Mitochondrial carrier domain"/>
    <property type="match status" value="2"/>
</dbReference>
<dbReference type="InterPro" id="IPR018108">
    <property type="entry name" value="Mitochondrial_sb/sol_carrier"/>
</dbReference>
<dbReference type="InterPro" id="IPR023395">
    <property type="entry name" value="Mt_carrier_dom_sf"/>
</dbReference>
<dbReference type="PANTHER" id="PTHR45667">
    <property type="entry name" value="S-ADENOSYLMETHIONINE MITOCHONDRIAL CARRIER PROTEIN"/>
    <property type="match status" value="1"/>
</dbReference>
<dbReference type="Pfam" id="PF00153">
    <property type="entry name" value="Mito_carr"/>
    <property type="match status" value="3"/>
</dbReference>
<dbReference type="SUPFAM" id="SSF103506">
    <property type="entry name" value="Mitochondrial carrier"/>
    <property type="match status" value="1"/>
</dbReference>
<dbReference type="PROSITE" id="PS50920">
    <property type="entry name" value="SOLCAR"/>
    <property type="match status" value="3"/>
</dbReference>
<organism>
    <name type="scientific">Schizosaccharomyces pombe (strain 972 / ATCC 24843)</name>
    <name type="common">Fission yeast</name>
    <dbReference type="NCBI Taxonomy" id="284812"/>
    <lineage>
        <taxon>Eukaryota</taxon>
        <taxon>Fungi</taxon>
        <taxon>Dikarya</taxon>
        <taxon>Ascomycota</taxon>
        <taxon>Taphrinomycotina</taxon>
        <taxon>Schizosaccharomycetes</taxon>
        <taxon>Schizosaccharomycetales</taxon>
        <taxon>Schizosaccharomycetaceae</taxon>
        <taxon>Schizosaccharomyces</taxon>
    </lineage>
</organism>